<protein>
    <recommendedName>
        <fullName evidence="1">GMP synthase [glutamine-hydrolyzing]</fullName>
        <ecNumber evidence="1">6.3.5.2</ecNumber>
    </recommendedName>
    <alternativeName>
        <fullName evidence="1">GMP synthetase</fullName>
    </alternativeName>
    <alternativeName>
        <fullName evidence="1">Glutamine amidotransferase</fullName>
    </alternativeName>
</protein>
<proteinExistence type="inferred from homology"/>
<gene>
    <name evidence="1" type="primary">guaA</name>
    <name type="ordered locus">BLi00686</name>
    <name type="ordered locus">BL00920</name>
</gene>
<organism>
    <name type="scientific">Bacillus licheniformis (strain ATCC 14580 / DSM 13 / JCM 2505 / CCUG 7422 / NBRC 12200 / NCIMB 9375 / NCTC 10341 / NRRL NRS-1264 / Gibson 46)</name>
    <dbReference type="NCBI Taxonomy" id="279010"/>
    <lineage>
        <taxon>Bacteria</taxon>
        <taxon>Bacillati</taxon>
        <taxon>Bacillota</taxon>
        <taxon>Bacilli</taxon>
        <taxon>Bacillales</taxon>
        <taxon>Bacillaceae</taxon>
        <taxon>Bacillus</taxon>
    </lineage>
</organism>
<evidence type="ECO:0000255" key="1">
    <source>
        <dbReference type="HAMAP-Rule" id="MF_00344"/>
    </source>
</evidence>
<reference key="1">
    <citation type="journal article" date="2004" name="J. Mol. Microbiol. Biotechnol.">
        <title>The complete genome sequence of Bacillus licheniformis DSM13, an organism with great industrial potential.</title>
        <authorList>
            <person name="Veith B."/>
            <person name="Herzberg C."/>
            <person name="Steckel S."/>
            <person name="Feesche J."/>
            <person name="Maurer K.H."/>
            <person name="Ehrenreich P."/>
            <person name="Baeumer S."/>
            <person name="Henne A."/>
            <person name="Liesegang H."/>
            <person name="Merkl R."/>
            <person name="Ehrenreich A."/>
            <person name="Gottschalk G."/>
        </authorList>
    </citation>
    <scope>NUCLEOTIDE SEQUENCE [LARGE SCALE GENOMIC DNA]</scope>
    <source>
        <strain>ATCC 14580 / DSM 13 / JCM 2505 / CCUG 7422 / NBRC 12200 / NCIMB 9375 / NCTC 10341 / NRRL NRS-1264 / Gibson 46</strain>
    </source>
</reference>
<reference key="2">
    <citation type="journal article" date="2004" name="Genome Biol.">
        <title>Complete genome sequence of the industrial bacterium Bacillus licheniformis and comparisons with closely related Bacillus species.</title>
        <authorList>
            <person name="Rey M.W."/>
            <person name="Ramaiya P."/>
            <person name="Nelson B.A."/>
            <person name="Brody-Karpin S.D."/>
            <person name="Zaretsky E.J."/>
            <person name="Tang M."/>
            <person name="Lopez de Leon A."/>
            <person name="Xiang H."/>
            <person name="Gusti V."/>
            <person name="Clausen I.G."/>
            <person name="Olsen P.B."/>
            <person name="Rasmussen M.D."/>
            <person name="Andersen J.T."/>
            <person name="Joergensen P.L."/>
            <person name="Larsen T.S."/>
            <person name="Sorokin A."/>
            <person name="Bolotin A."/>
            <person name="Lapidus A."/>
            <person name="Galleron N."/>
            <person name="Ehrlich S.D."/>
            <person name="Berka R.M."/>
        </authorList>
    </citation>
    <scope>NUCLEOTIDE SEQUENCE [LARGE SCALE GENOMIC DNA]</scope>
    <source>
        <strain>ATCC 14580 / DSM 13 / JCM 2505 / CCUG 7422 / NBRC 12200 / NCIMB 9375 / NCTC 10341 / NRRL NRS-1264 / Gibson 46</strain>
    </source>
</reference>
<feature type="chain" id="PRO_0000229401" description="GMP synthase [glutamine-hydrolyzing]">
    <location>
        <begin position="1"/>
        <end position="513"/>
    </location>
</feature>
<feature type="domain" description="Glutamine amidotransferase type-1" evidence="1">
    <location>
        <begin position="8"/>
        <end position="198"/>
    </location>
</feature>
<feature type="domain" description="GMPS ATP-PPase" evidence="1">
    <location>
        <begin position="199"/>
        <end position="388"/>
    </location>
</feature>
<feature type="active site" description="Nucleophile" evidence="1">
    <location>
        <position position="85"/>
    </location>
</feature>
<feature type="active site" evidence="1">
    <location>
        <position position="172"/>
    </location>
</feature>
<feature type="active site" evidence="1">
    <location>
        <position position="174"/>
    </location>
</feature>
<feature type="binding site" evidence="1">
    <location>
        <begin position="226"/>
        <end position="232"/>
    </location>
    <ligand>
        <name>ATP</name>
        <dbReference type="ChEBI" id="CHEBI:30616"/>
    </ligand>
</feature>
<comment type="function">
    <text evidence="1">Catalyzes the synthesis of GMP from XMP.</text>
</comment>
<comment type="catalytic activity">
    <reaction evidence="1">
        <text>XMP + L-glutamine + ATP + H2O = GMP + L-glutamate + AMP + diphosphate + 2 H(+)</text>
        <dbReference type="Rhea" id="RHEA:11680"/>
        <dbReference type="ChEBI" id="CHEBI:15377"/>
        <dbReference type="ChEBI" id="CHEBI:15378"/>
        <dbReference type="ChEBI" id="CHEBI:29985"/>
        <dbReference type="ChEBI" id="CHEBI:30616"/>
        <dbReference type="ChEBI" id="CHEBI:33019"/>
        <dbReference type="ChEBI" id="CHEBI:57464"/>
        <dbReference type="ChEBI" id="CHEBI:58115"/>
        <dbReference type="ChEBI" id="CHEBI:58359"/>
        <dbReference type="ChEBI" id="CHEBI:456215"/>
        <dbReference type="EC" id="6.3.5.2"/>
    </reaction>
</comment>
<comment type="pathway">
    <text evidence="1">Purine metabolism; GMP biosynthesis; GMP from XMP (L-Gln route): step 1/1.</text>
</comment>
<comment type="subunit">
    <text evidence="1">Homodimer.</text>
</comment>
<sequence>MTKLVNEMILVLDFGSQYNQLITRRIREFGVYSELHPHTLTAEEIKKMNPKGIILSGGPNSVYDEGSFRCDEKIFELDIPVLGICYGMQLMTHYLGGKVEAASQREYGKANIHIEGEPDLFKDLPNEQVVWMSHGDLVVEVPEGFTVDATSHHCPNSAMSKKDKKWYGVQFHPEVRHSEYGNDLLKNFVFGVCECVGEWSMENFIEIEMQKIRETVGDKQVLCALSGGVDSSVVAVLIHKAIGDQLTCIFVDHGLLRKGEAEGVMKTFSEGFNMNVIKVDAKDRFLNKLKGVSDPEQKRKIIGNEFIYVFDDEAEKLKGIDFLAQGTLYTDIIESGTATAQTIKSHHNVGGLPEDMQFELIEPLNTLFKDEVRALGTELGIPDEIVWRQPFPGPGLGIRVLGEVTEEKLEIVRESDAILREEIAKADLEKDIWQYFTVLPDIRSVGVMGDARTYDYTIGIRAVTSIDGMTSDWARIPWDVLEKISTRIVNEVKHINRVVYDITSKPPATIEWE</sequence>
<keyword id="KW-0067">ATP-binding</keyword>
<keyword id="KW-0315">Glutamine amidotransferase</keyword>
<keyword id="KW-0332">GMP biosynthesis</keyword>
<keyword id="KW-0436">Ligase</keyword>
<keyword id="KW-0547">Nucleotide-binding</keyword>
<keyword id="KW-0658">Purine biosynthesis</keyword>
<keyword id="KW-1185">Reference proteome</keyword>
<name>GUAA_BACLD</name>
<dbReference type="EC" id="6.3.5.2" evidence="1"/>
<dbReference type="EMBL" id="AE017333">
    <property type="protein sequence ID" value="AAU39624.1"/>
    <property type="molecule type" value="Genomic_DNA"/>
</dbReference>
<dbReference type="EMBL" id="CP000002">
    <property type="protein sequence ID" value="AAU22274.1"/>
    <property type="molecule type" value="Genomic_DNA"/>
</dbReference>
<dbReference type="RefSeq" id="WP_003179516.1">
    <property type="nucleotide sequence ID" value="NC_006322.1"/>
</dbReference>
<dbReference type="SMR" id="Q65MU0"/>
<dbReference type="STRING" id="279010.BL00920"/>
<dbReference type="MEROPS" id="C26.957"/>
<dbReference type="GeneID" id="92862732"/>
<dbReference type="KEGG" id="bld:BLi00686"/>
<dbReference type="KEGG" id="bli:BL00920"/>
<dbReference type="eggNOG" id="COG0518">
    <property type="taxonomic scope" value="Bacteria"/>
</dbReference>
<dbReference type="eggNOG" id="COG0519">
    <property type="taxonomic scope" value="Bacteria"/>
</dbReference>
<dbReference type="HOGENOM" id="CLU_014340_0_5_9"/>
<dbReference type="UniPathway" id="UPA00189">
    <property type="reaction ID" value="UER00296"/>
</dbReference>
<dbReference type="Proteomes" id="UP000000606">
    <property type="component" value="Chromosome"/>
</dbReference>
<dbReference type="GO" id="GO:0005829">
    <property type="term" value="C:cytosol"/>
    <property type="evidence" value="ECO:0007669"/>
    <property type="project" value="TreeGrafter"/>
</dbReference>
<dbReference type="GO" id="GO:0005524">
    <property type="term" value="F:ATP binding"/>
    <property type="evidence" value="ECO:0007669"/>
    <property type="project" value="UniProtKB-UniRule"/>
</dbReference>
<dbReference type="GO" id="GO:0003921">
    <property type="term" value="F:GMP synthase activity"/>
    <property type="evidence" value="ECO:0007669"/>
    <property type="project" value="InterPro"/>
</dbReference>
<dbReference type="CDD" id="cd01742">
    <property type="entry name" value="GATase1_GMP_Synthase"/>
    <property type="match status" value="1"/>
</dbReference>
<dbReference type="CDD" id="cd01997">
    <property type="entry name" value="GMP_synthase_C"/>
    <property type="match status" value="1"/>
</dbReference>
<dbReference type="FunFam" id="3.30.300.10:FF:000002">
    <property type="entry name" value="GMP synthase [glutamine-hydrolyzing]"/>
    <property type="match status" value="1"/>
</dbReference>
<dbReference type="FunFam" id="3.40.50.620:FF:000001">
    <property type="entry name" value="GMP synthase [glutamine-hydrolyzing]"/>
    <property type="match status" value="1"/>
</dbReference>
<dbReference type="FunFam" id="3.40.50.880:FF:000001">
    <property type="entry name" value="GMP synthase [glutamine-hydrolyzing]"/>
    <property type="match status" value="1"/>
</dbReference>
<dbReference type="Gene3D" id="3.30.300.10">
    <property type="match status" value="1"/>
</dbReference>
<dbReference type="Gene3D" id="3.40.50.880">
    <property type="match status" value="1"/>
</dbReference>
<dbReference type="Gene3D" id="3.40.50.620">
    <property type="entry name" value="HUPs"/>
    <property type="match status" value="1"/>
</dbReference>
<dbReference type="HAMAP" id="MF_00344">
    <property type="entry name" value="GMP_synthase"/>
    <property type="match status" value="1"/>
</dbReference>
<dbReference type="InterPro" id="IPR029062">
    <property type="entry name" value="Class_I_gatase-like"/>
</dbReference>
<dbReference type="InterPro" id="IPR017926">
    <property type="entry name" value="GATASE"/>
</dbReference>
<dbReference type="InterPro" id="IPR001674">
    <property type="entry name" value="GMP_synth_C"/>
</dbReference>
<dbReference type="InterPro" id="IPR004739">
    <property type="entry name" value="GMP_synth_GATase"/>
</dbReference>
<dbReference type="InterPro" id="IPR022955">
    <property type="entry name" value="GMP_synthase"/>
</dbReference>
<dbReference type="InterPro" id="IPR025777">
    <property type="entry name" value="GMPS_ATP_PPase_dom"/>
</dbReference>
<dbReference type="InterPro" id="IPR022310">
    <property type="entry name" value="NAD/GMP_synthase"/>
</dbReference>
<dbReference type="InterPro" id="IPR014729">
    <property type="entry name" value="Rossmann-like_a/b/a_fold"/>
</dbReference>
<dbReference type="NCBIfam" id="TIGR00884">
    <property type="entry name" value="guaA_Cterm"/>
    <property type="match status" value="1"/>
</dbReference>
<dbReference type="NCBIfam" id="TIGR00888">
    <property type="entry name" value="guaA_Nterm"/>
    <property type="match status" value="1"/>
</dbReference>
<dbReference type="NCBIfam" id="NF000848">
    <property type="entry name" value="PRK00074.1"/>
    <property type="match status" value="1"/>
</dbReference>
<dbReference type="PANTHER" id="PTHR11922:SF2">
    <property type="entry name" value="GMP SYNTHASE [GLUTAMINE-HYDROLYZING]"/>
    <property type="match status" value="1"/>
</dbReference>
<dbReference type="PANTHER" id="PTHR11922">
    <property type="entry name" value="GMP SYNTHASE-RELATED"/>
    <property type="match status" value="1"/>
</dbReference>
<dbReference type="Pfam" id="PF00117">
    <property type="entry name" value="GATase"/>
    <property type="match status" value="1"/>
</dbReference>
<dbReference type="Pfam" id="PF00958">
    <property type="entry name" value="GMP_synt_C"/>
    <property type="match status" value="1"/>
</dbReference>
<dbReference type="Pfam" id="PF02540">
    <property type="entry name" value="NAD_synthase"/>
    <property type="match status" value="1"/>
</dbReference>
<dbReference type="PRINTS" id="PR00097">
    <property type="entry name" value="ANTSNTHASEII"/>
</dbReference>
<dbReference type="PRINTS" id="PR00099">
    <property type="entry name" value="CPSGATASE"/>
</dbReference>
<dbReference type="PRINTS" id="PR00096">
    <property type="entry name" value="GATASE"/>
</dbReference>
<dbReference type="SUPFAM" id="SSF52402">
    <property type="entry name" value="Adenine nucleotide alpha hydrolases-like"/>
    <property type="match status" value="1"/>
</dbReference>
<dbReference type="SUPFAM" id="SSF52317">
    <property type="entry name" value="Class I glutamine amidotransferase-like"/>
    <property type="match status" value="1"/>
</dbReference>
<dbReference type="SUPFAM" id="SSF54810">
    <property type="entry name" value="GMP synthetase C-terminal dimerisation domain"/>
    <property type="match status" value="1"/>
</dbReference>
<dbReference type="PROSITE" id="PS51273">
    <property type="entry name" value="GATASE_TYPE_1"/>
    <property type="match status" value="1"/>
</dbReference>
<dbReference type="PROSITE" id="PS51553">
    <property type="entry name" value="GMPS_ATP_PPASE"/>
    <property type="match status" value="1"/>
</dbReference>
<accession>Q65MU0</accession>
<accession>Q62Y84</accession>